<accession>Q07281</accession>
<accession>Q38683</accession>
<sequence>TKASVGFKAGVKDYKLTYYTPDYETKDTDILAAFRMSPQPGVPPEEAGAAVAAESSTGTWTTVWTDGLTSLDRYKGRCYHIEPVAGEENQYIAYVAYPLDLFEEGSVTNMFTSIVGNVFGFKALRALRLEDLRIPVAYVKTFQGPPHGIQVERDKLNKYGRPLLGCTIKPKLGLSAKNYGRAVYECLRGGLDFTKDDENVNSQPFMRWRDRFVFCAEAIYKAQAETGEIKGHYLNATAGTCEEMMKRAVFARELGVPIVMHDYLTGGFTANTTLAHYCRDNGLLLHIHRAMHAVIDRQKNHGMHFRVLAKALRMSGGDHIHAGTVVGKLEGERDITLGFVDLLRDDFIEKDRSRGIFFTQDWVSLPGVLPVASGGIHVWHMPALTEIFGDDSVLQFGGGTLGHPWGNAPGAVANRVALEACVQARNEGRDLASEGNAIIREASKWSPELAAACEIWKEIKFEFPAMDTL</sequence>
<evidence type="ECO:0000255" key="1">
    <source>
        <dbReference type="HAMAP-Rule" id="MF_01338"/>
    </source>
</evidence>
<name>RBL_AKABI</name>
<proteinExistence type="inferred from homology"/>
<feature type="chain" id="PRO_0000062347" description="Ribulose bisphosphate carboxylase large chain">
    <location>
        <begin position="1" status="less than"/>
        <end position="469"/>
    </location>
</feature>
<feature type="active site" description="Proton acceptor" evidence="1">
    <location>
        <position position="169"/>
    </location>
</feature>
<feature type="active site" description="Proton acceptor" evidence="1">
    <location>
        <position position="288"/>
    </location>
</feature>
<feature type="binding site" description="in homodimeric partner" evidence="1">
    <location>
        <position position="117"/>
    </location>
    <ligand>
        <name>substrate</name>
    </ligand>
</feature>
<feature type="binding site" evidence="1">
    <location>
        <position position="167"/>
    </location>
    <ligand>
        <name>substrate</name>
    </ligand>
</feature>
<feature type="binding site" evidence="1">
    <location>
        <position position="171"/>
    </location>
    <ligand>
        <name>substrate</name>
    </ligand>
</feature>
<feature type="binding site" description="via carbamate group" evidence="1">
    <location>
        <position position="195"/>
    </location>
    <ligand>
        <name>Mg(2+)</name>
        <dbReference type="ChEBI" id="CHEBI:18420"/>
    </ligand>
</feature>
<feature type="binding site" evidence="1">
    <location>
        <position position="197"/>
    </location>
    <ligand>
        <name>Mg(2+)</name>
        <dbReference type="ChEBI" id="CHEBI:18420"/>
    </ligand>
</feature>
<feature type="binding site" evidence="1">
    <location>
        <position position="198"/>
    </location>
    <ligand>
        <name>Mg(2+)</name>
        <dbReference type="ChEBI" id="CHEBI:18420"/>
    </ligand>
</feature>
<feature type="binding site" evidence="1">
    <location>
        <position position="289"/>
    </location>
    <ligand>
        <name>substrate</name>
    </ligand>
</feature>
<feature type="binding site" evidence="1">
    <location>
        <position position="321"/>
    </location>
    <ligand>
        <name>substrate</name>
    </ligand>
</feature>
<feature type="binding site" evidence="1">
    <location>
        <position position="373"/>
    </location>
    <ligand>
        <name>substrate</name>
    </ligand>
</feature>
<feature type="site" description="Transition state stabilizer" evidence="1">
    <location>
        <position position="328"/>
    </location>
</feature>
<feature type="modified residue" description="N6,N6,N6-trimethyllysine" evidence="1">
    <location>
        <position position="8"/>
    </location>
</feature>
<feature type="modified residue" description="N6-carboxylysine" evidence="1">
    <location>
        <position position="195"/>
    </location>
</feature>
<feature type="disulfide bond" description="Interchain; in linked form" evidence="1">
    <location>
        <position position="241"/>
    </location>
</feature>
<feature type="non-terminal residue">
    <location>
        <position position="1"/>
    </location>
</feature>
<dbReference type="EC" id="4.1.1.39" evidence="1"/>
<dbReference type="EMBL" id="L12568">
    <property type="protein sequence ID" value="AAA32638.2"/>
    <property type="molecule type" value="Genomic_DNA"/>
</dbReference>
<dbReference type="SMR" id="Q07281"/>
<dbReference type="GO" id="GO:0009507">
    <property type="term" value="C:chloroplast"/>
    <property type="evidence" value="ECO:0007669"/>
    <property type="project" value="UniProtKB-SubCell"/>
</dbReference>
<dbReference type="GO" id="GO:0000287">
    <property type="term" value="F:magnesium ion binding"/>
    <property type="evidence" value="ECO:0007669"/>
    <property type="project" value="InterPro"/>
</dbReference>
<dbReference type="GO" id="GO:0004497">
    <property type="term" value="F:monooxygenase activity"/>
    <property type="evidence" value="ECO:0007669"/>
    <property type="project" value="UniProtKB-KW"/>
</dbReference>
<dbReference type="GO" id="GO:0016984">
    <property type="term" value="F:ribulose-bisphosphate carboxylase activity"/>
    <property type="evidence" value="ECO:0007669"/>
    <property type="project" value="UniProtKB-EC"/>
</dbReference>
<dbReference type="GO" id="GO:0009853">
    <property type="term" value="P:photorespiration"/>
    <property type="evidence" value="ECO:0007669"/>
    <property type="project" value="UniProtKB-KW"/>
</dbReference>
<dbReference type="GO" id="GO:0019253">
    <property type="term" value="P:reductive pentose-phosphate cycle"/>
    <property type="evidence" value="ECO:0007669"/>
    <property type="project" value="UniProtKB-KW"/>
</dbReference>
<dbReference type="CDD" id="cd08212">
    <property type="entry name" value="RuBisCO_large_I"/>
    <property type="match status" value="1"/>
</dbReference>
<dbReference type="FunFam" id="3.20.20.110:FF:000001">
    <property type="entry name" value="Ribulose bisphosphate carboxylase large chain"/>
    <property type="match status" value="1"/>
</dbReference>
<dbReference type="FunFam" id="3.30.70.150:FF:000001">
    <property type="entry name" value="Ribulose bisphosphate carboxylase large chain"/>
    <property type="match status" value="1"/>
</dbReference>
<dbReference type="Gene3D" id="3.20.20.110">
    <property type="entry name" value="Ribulose bisphosphate carboxylase, large subunit, C-terminal domain"/>
    <property type="match status" value="1"/>
</dbReference>
<dbReference type="Gene3D" id="3.30.70.150">
    <property type="entry name" value="RuBisCO large subunit, N-terminal domain"/>
    <property type="match status" value="1"/>
</dbReference>
<dbReference type="HAMAP" id="MF_01338">
    <property type="entry name" value="RuBisCO_L_type1"/>
    <property type="match status" value="1"/>
</dbReference>
<dbReference type="InterPro" id="IPR033966">
    <property type="entry name" value="RuBisCO"/>
</dbReference>
<dbReference type="InterPro" id="IPR020878">
    <property type="entry name" value="RuBisCo_large_chain_AS"/>
</dbReference>
<dbReference type="InterPro" id="IPR000685">
    <property type="entry name" value="RuBisCO_lsu_C"/>
</dbReference>
<dbReference type="InterPro" id="IPR036376">
    <property type="entry name" value="RuBisCO_lsu_C_sf"/>
</dbReference>
<dbReference type="InterPro" id="IPR017443">
    <property type="entry name" value="RuBisCO_lsu_fd_N"/>
</dbReference>
<dbReference type="InterPro" id="IPR036422">
    <property type="entry name" value="RuBisCO_lsu_N_sf"/>
</dbReference>
<dbReference type="InterPro" id="IPR020888">
    <property type="entry name" value="RuBisCO_lsuI"/>
</dbReference>
<dbReference type="NCBIfam" id="NF003252">
    <property type="entry name" value="PRK04208.1"/>
    <property type="match status" value="1"/>
</dbReference>
<dbReference type="PANTHER" id="PTHR42704">
    <property type="entry name" value="RIBULOSE BISPHOSPHATE CARBOXYLASE"/>
    <property type="match status" value="1"/>
</dbReference>
<dbReference type="PANTHER" id="PTHR42704:SF15">
    <property type="entry name" value="RIBULOSE BISPHOSPHATE CARBOXYLASE LARGE CHAIN"/>
    <property type="match status" value="1"/>
</dbReference>
<dbReference type="Pfam" id="PF00016">
    <property type="entry name" value="RuBisCO_large"/>
    <property type="match status" value="1"/>
</dbReference>
<dbReference type="Pfam" id="PF02788">
    <property type="entry name" value="RuBisCO_large_N"/>
    <property type="match status" value="1"/>
</dbReference>
<dbReference type="SFLD" id="SFLDG01052">
    <property type="entry name" value="RuBisCO"/>
    <property type="match status" value="1"/>
</dbReference>
<dbReference type="SFLD" id="SFLDS00014">
    <property type="entry name" value="RuBisCO"/>
    <property type="match status" value="1"/>
</dbReference>
<dbReference type="SFLD" id="SFLDG00301">
    <property type="entry name" value="RuBisCO-like_proteins"/>
    <property type="match status" value="1"/>
</dbReference>
<dbReference type="SUPFAM" id="SSF51649">
    <property type="entry name" value="RuBisCo, C-terminal domain"/>
    <property type="match status" value="1"/>
</dbReference>
<dbReference type="SUPFAM" id="SSF54966">
    <property type="entry name" value="RuBisCO, large subunit, small (N-terminal) domain"/>
    <property type="match status" value="1"/>
</dbReference>
<dbReference type="PROSITE" id="PS00157">
    <property type="entry name" value="RUBISCO_LARGE"/>
    <property type="match status" value="1"/>
</dbReference>
<keyword id="KW-0113">Calvin cycle</keyword>
<keyword id="KW-0120">Carbon dioxide fixation</keyword>
<keyword id="KW-0150">Chloroplast</keyword>
<keyword id="KW-1015">Disulfide bond</keyword>
<keyword id="KW-0456">Lyase</keyword>
<keyword id="KW-0460">Magnesium</keyword>
<keyword id="KW-0479">Metal-binding</keyword>
<keyword id="KW-0488">Methylation</keyword>
<keyword id="KW-0503">Monooxygenase</keyword>
<keyword id="KW-0560">Oxidoreductase</keyword>
<keyword id="KW-0601">Photorespiration</keyword>
<keyword id="KW-0602">Photosynthesis</keyword>
<keyword id="KW-0934">Plastid</keyword>
<gene>
    <name evidence="1" type="primary">rbcL</name>
</gene>
<organism>
    <name type="scientific">Akania bidwillii</name>
    <name type="common">Turnipwood</name>
    <name type="synonym">Akania lucens</name>
    <dbReference type="NCBI Taxonomy" id="19375"/>
    <lineage>
        <taxon>Eukaryota</taxon>
        <taxon>Viridiplantae</taxon>
        <taxon>Streptophyta</taxon>
        <taxon>Embryophyta</taxon>
        <taxon>Tracheophyta</taxon>
        <taxon>Spermatophyta</taxon>
        <taxon>Magnoliopsida</taxon>
        <taxon>eudicotyledons</taxon>
        <taxon>Gunneridae</taxon>
        <taxon>Pentapetalae</taxon>
        <taxon>rosids</taxon>
        <taxon>malvids</taxon>
        <taxon>Brassicales</taxon>
        <taxon>Akaniaceae</taxon>
        <taxon>Akania</taxon>
    </lineage>
</organism>
<reference key="1">
    <citation type="journal article" date="1992" name="Aust. Syst. Bot.">
        <title>Affinities of the Australian endemic Akaniaceae: new evidence from rbcL sequences.</title>
        <authorList>
            <person name="Gadek P.A."/>
            <person name="Quinn C.J."/>
            <person name="Rodman J.E."/>
            <person name="Karol K.G."/>
            <person name="Conti E."/>
            <person name="Price R.A."/>
            <person name="Fernando E.S."/>
        </authorList>
        <dbReference type="AGRICOLA" id="IND93029186"/>
    </citation>
    <scope>NUCLEOTIDE SEQUENCE [GENOMIC DNA]</scope>
</reference>
<geneLocation type="chloroplast"/>
<comment type="function">
    <text evidence="1">RuBisCO catalyzes two reactions: the carboxylation of D-ribulose 1,5-bisphosphate, the primary event in carbon dioxide fixation, as well as the oxidative fragmentation of the pentose substrate in the photorespiration process. Both reactions occur simultaneously and in competition at the same active site.</text>
</comment>
<comment type="catalytic activity">
    <reaction evidence="1">
        <text>2 (2R)-3-phosphoglycerate + 2 H(+) = D-ribulose 1,5-bisphosphate + CO2 + H2O</text>
        <dbReference type="Rhea" id="RHEA:23124"/>
        <dbReference type="ChEBI" id="CHEBI:15377"/>
        <dbReference type="ChEBI" id="CHEBI:15378"/>
        <dbReference type="ChEBI" id="CHEBI:16526"/>
        <dbReference type="ChEBI" id="CHEBI:57870"/>
        <dbReference type="ChEBI" id="CHEBI:58272"/>
        <dbReference type="EC" id="4.1.1.39"/>
    </reaction>
</comment>
<comment type="catalytic activity">
    <reaction evidence="1">
        <text>D-ribulose 1,5-bisphosphate + O2 = 2-phosphoglycolate + (2R)-3-phosphoglycerate + 2 H(+)</text>
        <dbReference type="Rhea" id="RHEA:36631"/>
        <dbReference type="ChEBI" id="CHEBI:15378"/>
        <dbReference type="ChEBI" id="CHEBI:15379"/>
        <dbReference type="ChEBI" id="CHEBI:57870"/>
        <dbReference type="ChEBI" id="CHEBI:58033"/>
        <dbReference type="ChEBI" id="CHEBI:58272"/>
    </reaction>
</comment>
<comment type="cofactor">
    <cofactor evidence="1">
        <name>Mg(2+)</name>
        <dbReference type="ChEBI" id="CHEBI:18420"/>
    </cofactor>
    <text evidence="1">Binds 1 Mg(2+) ion per subunit.</text>
</comment>
<comment type="subunit">
    <text evidence="1">Heterohexadecamer of 8 large chains and 8 small chains; disulfide-linked. The disulfide link is formed within the large subunit homodimers.</text>
</comment>
<comment type="subcellular location">
    <subcellularLocation>
        <location>Plastid</location>
        <location>Chloroplast</location>
    </subcellularLocation>
</comment>
<comment type="PTM">
    <text evidence="1">The disulfide bond which can form in the large chain dimeric partners within the hexadecamer appears to be associated with oxidative stress and protein turnover.</text>
</comment>
<comment type="miscellaneous">
    <text evidence="1">The basic functional RuBisCO is composed of a large chain homodimer in a 'head-to-tail' conformation. In form I RuBisCO this homodimer is arranged in a barrel-like tetramer with the small subunits forming a tetrameric 'cap' on each end of the 'barrel'.</text>
</comment>
<comment type="similarity">
    <text evidence="1">Belongs to the RuBisCO large chain family. Type I subfamily.</text>
</comment>
<protein>
    <recommendedName>
        <fullName evidence="1">Ribulose bisphosphate carboxylase large chain</fullName>
        <shortName evidence="1">RuBisCO large subunit</shortName>
        <ecNumber evidence="1">4.1.1.39</ecNumber>
    </recommendedName>
</protein>